<accession>Q4QJW4</accession>
<sequence length="635" mass="68281">MGKIIGIDLGTTNSCVAVMDGDKARVIENAEGARTTPSIIAYTDNETLVGQPAKRQAITNPKNTLFAIKRLIGRRFESEEVQRDIKIMPFEITRADNGDAWVNVKGDKLAPPQISAEVLKKMKKTAEDFLGESVTEAVITVPAYFNDAQRQATIDAGKIAGLDVKRIINEPTAAALAFGLGSSKENQVIAVYDLGGGTFDISIIEIDNFDGEQTFEVLATGGNTHLGGEDFDNRVIDYIIDEFKKEQNIDLRNDAMALQRVKEAAEKAKIELSSAQSTEVNLPYITADATGPKHLALNITRAKLEALVEDLVASSIESLKAVLKDADKGVSEIHDIILVGGQTRMPLVQQKVAEFFGKEARKDVNPDEAVAIGAAVQGGVLKGDVKDVLLLDVTPLSLGIETMGGVMTTLIEKNTTIPTKKSQVFSTAEDNQSAVTIHVLQGERKRAADNKSLGQFNLEGINPAPRGMPQIEVTFDIDANGVINVSAKDKNTGKEQQIRIQASSGLSDEEIQQMVRDAEANADADRKFEEVVQARNQADGIAHATRKQIAEAGDALSVADKEKIEAAVAELETAAKGEDKAEIEAKIEAVIKASEPLMQAVQAKAQQAGGEQPQQSSAKDDGVVDAEFEEVKDNK</sequence>
<name>DNAK_HAEI8</name>
<feature type="chain" id="PRO_0000225969" description="Chaperone protein DnaK">
    <location>
        <begin position="1"/>
        <end position="635"/>
    </location>
</feature>
<feature type="region of interest" description="Disordered" evidence="2">
    <location>
        <begin position="602"/>
        <end position="635"/>
    </location>
</feature>
<feature type="compositionally biased region" description="Low complexity" evidence="2">
    <location>
        <begin position="602"/>
        <end position="617"/>
    </location>
</feature>
<feature type="modified residue" description="Phosphothreonine; by autocatalysis" evidence="1">
    <location>
        <position position="198"/>
    </location>
</feature>
<comment type="function">
    <text evidence="1">Acts as a chaperone.</text>
</comment>
<comment type="induction">
    <text evidence="1">By stress conditions e.g. heat shock.</text>
</comment>
<comment type="similarity">
    <text evidence="1">Belongs to the heat shock protein 70 family.</text>
</comment>
<evidence type="ECO:0000255" key="1">
    <source>
        <dbReference type="HAMAP-Rule" id="MF_00332"/>
    </source>
</evidence>
<evidence type="ECO:0000256" key="2">
    <source>
        <dbReference type="SAM" id="MobiDB-lite"/>
    </source>
</evidence>
<proteinExistence type="inferred from homology"/>
<protein>
    <recommendedName>
        <fullName evidence="1">Chaperone protein DnaK</fullName>
    </recommendedName>
    <alternativeName>
        <fullName evidence="1">HSP70</fullName>
    </alternativeName>
    <alternativeName>
        <fullName evidence="1">Heat shock 70 kDa protein</fullName>
    </alternativeName>
    <alternativeName>
        <fullName evidence="1">Heat shock protein 70</fullName>
    </alternativeName>
</protein>
<keyword id="KW-0067">ATP-binding</keyword>
<keyword id="KW-0143">Chaperone</keyword>
<keyword id="KW-0547">Nucleotide-binding</keyword>
<keyword id="KW-0597">Phosphoprotein</keyword>
<keyword id="KW-0346">Stress response</keyword>
<dbReference type="EMBL" id="CP000057">
    <property type="protein sequence ID" value="AAX88683.1"/>
    <property type="molecule type" value="Genomic_DNA"/>
</dbReference>
<dbReference type="RefSeq" id="WP_005694297.1">
    <property type="nucleotide sequence ID" value="NC_007146.2"/>
</dbReference>
<dbReference type="SMR" id="Q4QJW4"/>
<dbReference type="GeneID" id="93220630"/>
<dbReference type="KEGG" id="hit:NTHI1929"/>
<dbReference type="HOGENOM" id="CLU_005965_2_1_6"/>
<dbReference type="Proteomes" id="UP000002525">
    <property type="component" value="Chromosome"/>
</dbReference>
<dbReference type="GO" id="GO:0005524">
    <property type="term" value="F:ATP binding"/>
    <property type="evidence" value="ECO:0007669"/>
    <property type="project" value="UniProtKB-UniRule"/>
</dbReference>
<dbReference type="GO" id="GO:0140662">
    <property type="term" value="F:ATP-dependent protein folding chaperone"/>
    <property type="evidence" value="ECO:0007669"/>
    <property type="project" value="InterPro"/>
</dbReference>
<dbReference type="GO" id="GO:0051082">
    <property type="term" value="F:unfolded protein binding"/>
    <property type="evidence" value="ECO:0007669"/>
    <property type="project" value="InterPro"/>
</dbReference>
<dbReference type="CDD" id="cd10234">
    <property type="entry name" value="ASKHA_NBD_HSP70_DnaK-like"/>
    <property type="match status" value="1"/>
</dbReference>
<dbReference type="FunFam" id="2.60.34.10:FF:000014">
    <property type="entry name" value="Chaperone protein DnaK HSP70"/>
    <property type="match status" value="1"/>
</dbReference>
<dbReference type="FunFam" id="3.30.30.30:FF:000003">
    <property type="entry name" value="Heat shock protein 9"/>
    <property type="match status" value="1"/>
</dbReference>
<dbReference type="FunFam" id="1.20.1270.10:FF:000001">
    <property type="entry name" value="Molecular chaperone DnaK"/>
    <property type="match status" value="1"/>
</dbReference>
<dbReference type="FunFam" id="3.30.420.40:FF:000004">
    <property type="entry name" value="Molecular chaperone DnaK"/>
    <property type="match status" value="1"/>
</dbReference>
<dbReference type="FunFam" id="3.90.640.10:FF:000003">
    <property type="entry name" value="Molecular chaperone DnaK"/>
    <property type="match status" value="1"/>
</dbReference>
<dbReference type="Gene3D" id="1.20.1270.10">
    <property type="match status" value="1"/>
</dbReference>
<dbReference type="Gene3D" id="3.30.420.40">
    <property type="match status" value="2"/>
</dbReference>
<dbReference type="Gene3D" id="3.90.640.10">
    <property type="entry name" value="Actin, Chain A, domain 4"/>
    <property type="match status" value="1"/>
</dbReference>
<dbReference type="Gene3D" id="2.60.34.10">
    <property type="entry name" value="Substrate Binding Domain Of DNAk, Chain A, domain 1"/>
    <property type="match status" value="1"/>
</dbReference>
<dbReference type="HAMAP" id="MF_00332">
    <property type="entry name" value="DnaK"/>
    <property type="match status" value="1"/>
</dbReference>
<dbReference type="InterPro" id="IPR043129">
    <property type="entry name" value="ATPase_NBD"/>
</dbReference>
<dbReference type="InterPro" id="IPR012725">
    <property type="entry name" value="Chaperone_DnaK"/>
</dbReference>
<dbReference type="InterPro" id="IPR018181">
    <property type="entry name" value="Heat_shock_70_CS"/>
</dbReference>
<dbReference type="InterPro" id="IPR029048">
    <property type="entry name" value="HSP70_C_sf"/>
</dbReference>
<dbReference type="InterPro" id="IPR029047">
    <property type="entry name" value="HSP70_peptide-bd_sf"/>
</dbReference>
<dbReference type="InterPro" id="IPR013126">
    <property type="entry name" value="Hsp_70_fam"/>
</dbReference>
<dbReference type="NCBIfam" id="NF001413">
    <property type="entry name" value="PRK00290.1"/>
    <property type="match status" value="1"/>
</dbReference>
<dbReference type="NCBIfam" id="TIGR02350">
    <property type="entry name" value="prok_dnaK"/>
    <property type="match status" value="1"/>
</dbReference>
<dbReference type="PANTHER" id="PTHR19375">
    <property type="entry name" value="HEAT SHOCK PROTEIN 70KDA"/>
    <property type="match status" value="1"/>
</dbReference>
<dbReference type="Pfam" id="PF00012">
    <property type="entry name" value="HSP70"/>
    <property type="match status" value="1"/>
</dbReference>
<dbReference type="PRINTS" id="PR00301">
    <property type="entry name" value="HEATSHOCK70"/>
</dbReference>
<dbReference type="SUPFAM" id="SSF53067">
    <property type="entry name" value="Actin-like ATPase domain"/>
    <property type="match status" value="2"/>
</dbReference>
<dbReference type="SUPFAM" id="SSF100934">
    <property type="entry name" value="Heat shock protein 70kD (HSP70), C-terminal subdomain"/>
    <property type="match status" value="1"/>
</dbReference>
<dbReference type="SUPFAM" id="SSF100920">
    <property type="entry name" value="Heat shock protein 70kD (HSP70), peptide-binding domain"/>
    <property type="match status" value="1"/>
</dbReference>
<dbReference type="PROSITE" id="PS00297">
    <property type="entry name" value="HSP70_1"/>
    <property type="match status" value="1"/>
</dbReference>
<dbReference type="PROSITE" id="PS00329">
    <property type="entry name" value="HSP70_2"/>
    <property type="match status" value="1"/>
</dbReference>
<dbReference type="PROSITE" id="PS01036">
    <property type="entry name" value="HSP70_3"/>
    <property type="match status" value="1"/>
</dbReference>
<organism>
    <name type="scientific">Haemophilus influenzae (strain 86-028NP)</name>
    <dbReference type="NCBI Taxonomy" id="281310"/>
    <lineage>
        <taxon>Bacteria</taxon>
        <taxon>Pseudomonadati</taxon>
        <taxon>Pseudomonadota</taxon>
        <taxon>Gammaproteobacteria</taxon>
        <taxon>Pasteurellales</taxon>
        <taxon>Pasteurellaceae</taxon>
        <taxon>Haemophilus</taxon>
    </lineage>
</organism>
<gene>
    <name evidence="1" type="primary">dnaK</name>
    <name type="ordered locus">NTHI1929</name>
</gene>
<reference key="1">
    <citation type="journal article" date="2005" name="J. Bacteriol.">
        <title>Genomic sequence of an otitis media isolate of nontypeable Haemophilus influenzae: comparative study with H. influenzae serotype d, strain KW20.</title>
        <authorList>
            <person name="Harrison A."/>
            <person name="Dyer D.W."/>
            <person name="Gillaspy A."/>
            <person name="Ray W.C."/>
            <person name="Mungur R."/>
            <person name="Carson M.B."/>
            <person name="Zhong H."/>
            <person name="Gipson J."/>
            <person name="Gipson M."/>
            <person name="Johnson L.S."/>
            <person name="Lewis L."/>
            <person name="Bakaletz L.O."/>
            <person name="Munson R.S. Jr."/>
        </authorList>
    </citation>
    <scope>NUCLEOTIDE SEQUENCE [LARGE SCALE GENOMIC DNA]</scope>
    <source>
        <strain>86-028NP</strain>
    </source>
</reference>